<proteinExistence type="inferred from homology"/>
<keyword id="KW-0012">Acyltransferase</keyword>
<keyword id="KW-0963">Cytoplasm</keyword>
<keyword id="KW-0275">Fatty acid biosynthesis</keyword>
<keyword id="KW-0276">Fatty acid metabolism</keyword>
<keyword id="KW-0444">Lipid biosynthesis</keyword>
<keyword id="KW-0443">Lipid metabolism</keyword>
<keyword id="KW-0511">Multifunctional enzyme</keyword>
<keyword id="KW-0808">Transferase</keyword>
<feature type="chain" id="PRO_1000056428" description="Beta-ketoacyl-[acyl-carrier-protein] synthase III">
    <location>
        <begin position="1"/>
        <end position="325"/>
    </location>
</feature>
<feature type="region of interest" description="ACP-binding" evidence="1">
    <location>
        <begin position="251"/>
        <end position="255"/>
    </location>
</feature>
<feature type="active site" evidence="1">
    <location>
        <position position="113"/>
    </location>
</feature>
<feature type="active site" evidence="1">
    <location>
        <position position="250"/>
    </location>
</feature>
<feature type="active site" evidence="1">
    <location>
        <position position="280"/>
    </location>
</feature>
<accession>A4VXD4</accession>
<sequence>MRNHAKISQVAHYLPKKIVTNDDLAQRMETSDEWIRSRTGIGQRHIVTGETTSDLASQVARKLLEKSQLDASEIDFIIVATITPDASMPSTAAMVQAAIGAKNAFAYDLVAACSGFVFALSTAEKLLASGVYKRGLVIGAETLSRSVDWSDRSTAVLFGDGAGGVLLEACEQPTFLAEILRTDGGRGASLTAGIDQKETPFSTQSCQQPFIQMEGRAIFEFATRDVTATMAELLEQADMTVDCVDYFLLHQANIRILDKMARKLGVAREKFPANMDKYGNTSAASLPILLSECVESGMLRLDGSQTILMAGFGGGLTWGTLLLQL</sequence>
<organism>
    <name type="scientific">Streptococcus suis (strain 05ZYH33)</name>
    <dbReference type="NCBI Taxonomy" id="391295"/>
    <lineage>
        <taxon>Bacteria</taxon>
        <taxon>Bacillati</taxon>
        <taxon>Bacillota</taxon>
        <taxon>Bacilli</taxon>
        <taxon>Lactobacillales</taxon>
        <taxon>Streptococcaceae</taxon>
        <taxon>Streptococcus</taxon>
    </lineage>
</organism>
<dbReference type="EC" id="2.3.1.180" evidence="1"/>
<dbReference type="EMBL" id="CP000407">
    <property type="protein sequence ID" value="ABP90773.1"/>
    <property type="molecule type" value="Genomic_DNA"/>
</dbReference>
<dbReference type="SMR" id="A4VXD4"/>
<dbReference type="STRING" id="391295.SSU05_1807"/>
<dbReference type="KEGG" id="ssu:SSU05_1807"/>
<dbReference type="eggNOG" id="COG0332">
    <property type="taxonomic scope" value="Bacteria"/>
</dbReference>
<dbReference type="HOGENOM" id="CLU_039592_4_1_9"/>
<dbReference type="UniPathway" id="UPA00094"/>
<dbReference type="GO" id="GO:0005737">
    <property type="term" value="C:cytoplasm"/>
    <property type="evidence" value="ECO:0007669"/>
    <property type="project" value="UniProtKB-SubCell"/>
</dbReference>
<dbReference type="GO" id="GO:0004315">
    <property type="term" value="F:3-oxoacyl-[acyl-carrier-protein] synthase activity"/>
    <property type="evidence" value="ECO:0007669"/>
    <property type="project" value="InterPro"/>
</dbReference>
<dbReference type="GO" id="GO:0033818">
    <property type="term" value="F:beta-ketoacyl-acyl-carrier-protein synthase III activity"/>
    <property type="evidence" value="ECO:0007669"/>
    <property type="project" value="UniProtKB-UniRule"/>
</dbReference>
<dbReference type="GO" id="GO:0006633">
    <property type="term" value="P:fatty acid biosynthetic process"/>
    <property type="evidence" value="ECO:0007669"/>
    <property type="project" value="UniProtKB-UniRule"/>
</dbReference>
<dbReference type="CDD" id="cd00830">
    <property type="entry name" value="KAS_III"/>
    <property type="match status" value="1"/>
</dbReference>
<dbReference type="Gene3D" id="3.40.47.10">
    <property type="match status" value="1"/>
</dbReference>
<dbReference type="HAMAP" id="MF_01815">
    <property type="entry name" value="FabH"/>
    <property type="match status" value="1"/>
</dbReference>
<dbReference type="InterPro" id="IPR013747">
    <property type="entry name" value="ACP_syn_III_C"/>
</dbReference>
<dbReference type="InterPro" id="IPR013751">
    <property type="entry name" value="ACP_syn_III_N"/>
</dbReference>
<dbReference type="InterPro" id="IPR004655">
    <property type="entry name" value="FabH"/>
</dbReference>
<dbReference type="InterPro" id="IPR016039">
    <property type="entry name" value="Thiolase-like"/>
</dbReference>
<dbReference type="NCBIfam" id="TIGR00747">
    <property type="entry name" value="fabH"/>
    <property type="match status" value="1"/>
</dbReference>
<dbReference type="NCBIfam" id="NF006829">
    <property type="entry name" value="PRK09352.1"/>
    <property type="match status" value="1"/>
</dbReference>
<dbReference type="PANTHER" id="PTHR43091">
    <property type="entry name" value="3-OXOACYL-[ACYL-CARRIER-PROTEIN] SYNTHASE"/>
    <property type="match status" value="1"/>
</dbReference>
<dbReference type="PANTHER" id="PTHR43091:SF1">
    <property type="entry name" value="BETA-KETOACYL-[ACYL-CARRIER-PROTEIN] SYNTHASE III, CHLOROPLASTIC"/>
    <property type="match status" value="1"/>
</dbReference>
<dbReference type="Pfam" id="PF08545">
    <property type="entry name" value="ACP_syn_III"/>
    <property type="match status" value="1"/>
</dbReference>
<dbReference type="Pfam" id="PF08541">
    <property type="entry name" value="ACP_syn_III_C"/>
    <property type="match status" value="1"/>
</dbReference>
<dbReference type="SUPFAM" id="SSF53901">
    <property type="entry name" value="Thiolase-like"/>
    <property type="match status" value="1"/>
</dbReference>
<reference key="1">
    <citation type="journal article" date="2007" name="PLoS ONE">
        <title>A glimpse of streptococcal toxic shock syndrome from comparative genomics of S. suis 2 Chinese isolates.</title>
        <authorList>
            <person name="Chen C."/>
            <person name="Tang J."/>
            <person name="Dong W."/>
            <person name="Wang C."/>
            <person name="Feng Y."/>
            <person name="Wang J."/>
            <person name="Zheng F."/>
            <person name="Pan X."/>
            <person name="Liu D."/>
            <person name="Li M."/>
            <person name="Song Y."/>
            <person name="Zhu X."/>
            <person name="Sun H."/>
            <person name="Feng T."/>
            <person name="Guo Z."/>
            <person name="Ju A."/>
            <person name="Ge J."/>
            <person name="Dong Y."/>
            <person name="Sun W."/>
            <person name="Jiang Y."/>
            <person name="Wang J."/>
            <person name="Yan J."/>
            <person name="Yang H."/>
            <person name="Wang X."/>
            <person name="Gao G.F."/>
            <person name="Yang R."/>
            <person name="Wang J."/>
            <person name="Yu J."/>
        </authorList>
    </citation>
    <scope>NUCLEOTIDE SEQUENCE [LARGE SCALE GENOMIC DNA]</scope>
    <source>
        <strain>05ZYH33</strain>
    </source>
</reference>
<name>FABH_STRSY</name>
<protein>
    <recommendedName>
        <fullName evidence="1">Beta-ketoacyl-[acyl-carrier-protein] synthase III</fullName>
        <shortName evidence="1">Beta-ketoacyl-ACP synthase III</shortName>
        <shortName evidence="1">KAS III</shortName>
        <ecNumber evidence="1">2.3.1.180</ecNumber>
    </recommendedName>
    <alternativeName>
        <fullName evidence="1">3-oxoacyl-[acyl-carrier-protein] synthase 3</fullName>
    </alternativeName>
    <alternativeName>
        <fullName evidence="1">3-oxoacyl-[acyl-carrier-protein] synthase III</fullName>
    </alternativeName>
</protein>
<gene>
    <name evidence="1" type="primary">fabH</name>
    <name type="ordered locus">SSU05_1807</name>
</gene>
<comment type="function">
    <text evidence="1">Catalyzes the condensation reaction of fatty acid synthesis by the addition to an acyl acceptor of two carbons from malonyl-ACP. Catalyzes the first condensation reaction which initiates fatty acid synthesis and may therefore play a role in governing the total rate of fatty acid production. Possesses both acetoacetyl-ACP synthase and acetyl transacylase activities. Its substrate specificity determines the biosynthesis of branched-chain and/or straight-chain of fatty acids.</text>
</comment>
<comment type="catalytic activity">
    <reaction evidence="1">
        <text>malonyl-[ACP] + acetyl-CoA + H(+) = 3-oxobutanoyl-[ACP] + CO2 + CoA</text>
        <dbReference type="Rhea" id="RHEA:12080"/>
        <dbReference type="Rhea" id="RHEA-COMP:9623"/>
        <dbReference type="Rhea" id="RHEA-COMP:9625"/>
        <dbReference type="ChEBI" id="CHEBI:15378"/>
        <dbReference type="ChEBI" id="CHEBI:16526"/>
        <dbReference type="ChEBI" id="CHEBI:57287"/>
        <dbReference type="ChEBI" id="CHEBI:57288"/>
        <dbReference type="ChEBI" id="CHEBI:78449"/>
        <dbReference type="ChEBI" id="CHEBI:78450"/>
        <dbReference type="EC" id="2.3.1.180"/>
    </reaction>
</comment>
<comment type="pathway">
    <text evidence="1">Lipid metabolism; fatty acid biosynthesis.</text>
</comment>
<comment type="subunit">
    <text evidence="1">Homodimer.</text>
</comment>
<comment type="subcellular location">
    <subcellularLocation>
        <location evidence="1">Cytoplasm</location>
    </subcellularLocation>
</comment>
<comment type="domain">
    <text evidence="1">The last Arg residue of the ACP-binding site is essential for the weak association between ACP/AcpP and FabH.</text>
</comment>
<comment type="similarity">
    <text evidence="1">Belongs to the thiolase-like superfamily. FabH family.</text>
</comment>
<evidence type="ECO:0000255" key="1">
    <source>
        <dbReference type="HAMAP-Rule" id="MF_01815"/>
    </source>
</evidence>